<organism>
    <name type="scientific">Chloroflexus aurantiacus (strain ATCC 29366 / DSM 635 / J-10-fl)</name>
    <dbReference type="NCBI Taxonomy" id="324602"/>
    <lineage>
        <taxon>Bacteria</taxon>
        <taxon>Bacillati</taxon>
        <taxon>Chloroflexota</taxon>
        <taxon>Chloroflexia</taxon>
        <taxon>Chloroflexales</taxon>
        <taxon>Chloroflexineae</taxon>
        <taxon>Chloroflexaceae</taxon>
        <taxon>Chloroflexus</taxon>
    </lineage>
</organism>
<protein>
    <recommendedName>
        <fullName evidence="1">Triosephosphate isomerase</fullName>
        <shortName evidence="1">TIM</shortName>
        <shortName evidence="1">TPI</shortName>
        <ecNumber evidence="1">5.3.1.1</ecNumber>
    </recommendedName>
    <alternativeName>
        <fullName evidence="1">Triose-phosphate isomerase</fullName>
    </alternativeName>
</protein>
<feature type="chain" id="PRO_0000090202" description="Triosephosphate isomerase">
    <location>
        <begin position="1"/>
        <end position="250"/>
    </location>
</feature>
<feature type="active site" description="Electrophile" evidence="1">
    <location>
        <position position="95"/>
    </location>
</feature>
<feature type="active site" description="Proton acceptor" evidence="1">
    <location>
        <position position="167"/>
    </location>
</feature>
<feature type="binding site" evidence="1">
    <location>
        <begin position="9"/>
        <end position="11"/>
    </location>
    <ligand>
        <name>substrate</name>
    </ligand>
</feature>
<feature type="binding site" evidence="1">
    <location>
        <position position="173"/>
    </location>
    <ligand>
        <name>substrate</name>
    </ligand>
</feature>
<feature type="binding site" evidence="1">
    <location>
        <position position="213"/>
    </location>
    <ligand>
        <name>substrate</name>
    </ligand>
</feature>
<feature type="binding site" evidence="1">
    <location>
        <begin position="234"/>
        <end position="235"/>
    </location>
    <ligand>
        <name>substrate</name>
    </ligand>
</feature>
<feature type="sequence conflict" description="In Ref. 2; AAB48821." evidence="2" ref="2">
    <location>
        <position position="52"/>
    </location>
</feature>
<name>TPIS_CHLAA</name>
<gene>
    <name evidence="1" type="primary">tpiA</name>
    <name type="synonym">tpi</name>
    <name type="ordered locus">Caur_3825</name>
</gene>
<proteinExistence type="inferred from homology"/>
<reference key="1">
    <citation type="journal article" date="2011" name="BMC Genomics">
        <title>Complete genome sequence of the filamentous anoxygenic phototrophic bacterium Chloroflexus aurantiacus.</title>
        <authorList>
            <person name="Tang K.H."/>
            <person name="Barry K."/>
            <person name="Chertkov O."/>
            <person name="Dalin E."/>
            <person name="Han C.S."/>
            <person name="Hauser L.J."/>
            <person name="Honchak B.M."/>
            <person name="Karbach L.E."/>
            <person name="Land M.L."/>
            <person name="Lapidus A."/>
            <person name="Larimer F.W."/>
            <person name="Mikhailova N."/>
            <person name="Pitluck S."/>
            <person name="Pierson B.K."/>
            <person name="Blankenship R.E."/>
        </authorList>
    </citation>
    <scope>NUCLEOTIDE SEQUENCE [LARGE SCALE GENOMIC DNA]</scope>
    <source>
        <strain>ATCC 29366 / DSM 635 / J-10-fl</strain>
    </source>
</reference>
<reference key="2">
    <citation type="journal article" date="1997" name="Proc. Natl. Acad. Sci. U.S.A.">
        <title>Evidence that eukaryotic triosephosphate isomerase is of alpha-proteobacterial origin.</title>
        <authorList>
            <person name="Keeling P.J."/>
            <person name="Doolittle W.F."/>
        </authorList>
    </citation>
    <scope>NUCLEOTIDE SEQUENCE [GENOMIC DNA] OF 12-232</scope>
</reference>
<keyword id="KW-0963">Cytoplasm</keyword>
<keyword id="KW-0312">Gluconeogenesis</keyword>
<keyword id="KW-0324">Glycolysis</keyword>
<keyword id="KW-0413">Isomerase</keyword>
<keyword id="KW-1185">Reference proteome</keyword>
<evidence type="ECO:0000255" key="1">
    <source>
        <dbReference type="HAMAP-Rule" id="MF_00147"/>
    </source>
</evidence>
<evidence type="ECO:0000305" key="2"/>
<accession>P96744</accession>
<accession>A9WCP1</accession>
<dbReference type="EC" id="5.3.1.1" evidence="1"/>
<dbReference type="EMBL" id="CP000909">
    <property type="protein sequence ID" value="ABY37003.1"/>
    <property type="molecule type" value="Genomic_DNA"/>
</dbReference>
<dbReference type="EMBL" id="U73963">
    <property type="protein sequence ID" value="AAB48821.1"/>
    <property type="molecule type" value="Genomic_DNA"/>
</dbReference>
<dbReference type="RefSeq" id="WP_012259656.1">
    <property type="nucleotide sequence ID" value="NC_010175.1"/>
</dbReference>
<dbReference type="RefSeq" id="YP_001637392.1">
    <property type="nucleotide sequence ID" value="NC_010175.1"/>
</dbReference>
<dbReference type="SMR" id="P96744"/>
<dbReference type="FunCoup" id="P96744">
    <property type="interactions" value="456"/>
</dbReference>
<dbReference type="STRING" id="324602.Caur_3825"/>
<dbReference type="EnsemblBacteria" id="ABY37003">
    <property type="protein sequence ID" value="ABY37003"/>
    <property type="gene ID" value="Caur_3825"/>
</dbReference>
<dbReference type="KEGG" id="cau:Caur_3825"/>
<dbReference type="PATRIC" id="fig|324602.8.peg.4293"/>
<dbReference type="eggNOG" id="COG0149">
    <property type="taxonomic scope" value="Bacteria"/>
</dbReference>
<dbReference type="HOGENOM" id="CLU_024251_2_3_0"/>
<dbReference type="InParanoid" id="P96744"/>
<dbReference type="UniPathway" id="UPA00109">
    <property type="reaction ID" value="UER00189"/>
</dbReference>
<dbReference type="UniPathway" id="UPA00138"/>
<dbReference type="Proteomes" id="UP000002008">
    <property type="component" value="Chromosome"/>
</dbReference>
<dbReference type="GO" id="GO:0005829">
    <property type="term" value="C:cytosol"/>
    <property type="evidence" value="ECO:0000318"/>
    <property type="project" value="GO_Central"/>
</dbReference>
<dbReference type="GO" id="GO:0004807">
    <property type="term" value="F:triose-phosphate isomerase activity"/>
    <property type="evidence" value="ECO:0000318"/>
    <property type="project" value="GO_Central"/>
</dbReference>
<dbReference type="GO" id="GO:0006094">
    <property type="term" value="P:gluconeogenesis"/>
    <property type="evidence" value="ECO:0000318"/>
    <property type="project" value="GO_Central"/>
</dbReference>
<dbReference type="GO" id="GO:0046166">
    <property type="term" value="P:glyceraldehyde-3-phosphate biosynthetic process"/>
    <property type="evidence" value="ECO:0000318"/>
    <property type="project" value="GO_Central"/>
</dbReference>
<dbReference type="GO" id="GO:0019563">
    <property type="term" value="P:glycerol catabolic process"/>
    <property type="evidence" value="ECO:0000318"/>
    <property type="project" value="GO_Central"/>
</dbReference>
<dbReference type="GO" id="GO:0006096">
    <property type="term" value="P:glycolytic process"/>
    <property type="evidence" value="ECO:0000318"/>
    <property type="project" value="GO_Central"/>
</dbReference>
<dbReference type="CDD" id="cd00311">
    <property type="entry name" value="TIM"/>
    <property type="match status" value="1"/>
</dbReference>
<dbReference type="FunFam" id="3.20.20.70:FF:000016">
    <property type="entry name" value="Triosephosphate isomerase"/>
    <property type="match status" value="1"/>
</dbReference>
<dbReference type="Gene3D" id="3.20.20.70">
    <property type="entry name" value="Aldolase class I"/>
    <property type="match status" value="1"/>
</dbReference>
<dbReference type="HAMAP" id="MF_00147_B">
    <property type="entry name" value="TIM_B"/>
    <property type="match status" value="1"/>
</dbReference>
<dbReference type="InterPro" id="IPR013785">
    <property type="entry name" value="Aldolase_TIM"/>
</dbReference>
<dbReference type="InterPro" id="IPR035990">
    <property type="entry name" value="TIM_sf"/>
</dbReference>
<dbReference type="InterPro" id="IPR022896">
    <property type="entry name" value="TrioseP_Isoase_bac/euk"/>
</dbReference>
<dbReference type="InterPro" id="IPR000652">
    <property type="entry name" value="Triosephosphate_isomerase"/>
</dbReference>
<dbReference type="InterPro" id="IPR020861">
    <property type="entry name" value="Triosephosphate_isomerase_AS"/>
</dbReference>
<dbReference type="NCBIfam" id="TIGR00419">
    <property type="entry name" value="tim"/>
    <property type="match status" value="1"/>
</dbReference>
<dbReference type="PANTHER" id="PTHR21139">
    <property type="entry name" value="TRIOSEPHOSPHATE ISOMERASE"/>
    <property type="match status" value="1"/>
</dbReference>
<dbReference type="PANTHER" id="PTHR21139:SF42">
    <property type="entry name" value="TRIOSEPHOSPHATE ISOMERASE"/>
    <property type="match status" value="1"/>
</dbReference>
<dbReference type="Pfam" id="PF00121">
    <property type="entry name" value="TIM"/>
    <property type="match status" value="1"/>
</dbReference>
<dbReference type="SUPFAM" id="SSF51351">
    <property type="entry name" value="Triosephosphate isomerase (TIM)"/>
    <property type="match status" value="1"/>
</dbReference>
<dbReference type="PROSITE" id="PS00171">
    <property type="entry name" value="TIM_1"/>
    <property type="match status" value="1"/>
</dbReference>
<dbReference type="PROSITE" id="PS51440">
    <property type="entry name" value="TIM_2"/>
    <property type="match status" value="1"/>
</dbReference>
<sequence>MRIPLIAGNWKMYKTVGEATTLVRDLLAGLGELSDREAIVCPPFTALAAVAALVADSPLGLGAQNLYPEAQGAFTGEVSPPMLVDIGCRYVIIGHSERRQYFGESDAFVNRKLRAALAHGLRPIVCVGESKPQRDAGQAEPIVTAQVRAALLEVPPDQMANVVIAYEPIWAIGTGDTATPADAQAMHAAIRATLAELYGSEIAATVRIQYGGSVKPDNIDELMAQPDIDGALVGGASLQAASFLRIIHYQ</sequence>
<comment type="function">
    <text evidence="1">Involved in the gluconeogenesis. Catalyzes stereospecifically the conversion of dihydroxyacetone phosphate (DHAP) to D-glyceraldehyde-3-phosphate (G3P).</text>
</comment>
<comment type="catalytic activity">
    <reaction evidence="1">
        <text>D-glyceraldehyde 3-phosphate = dihydroxyacetone phosphate</text>
        <dbReference type="Rhea" id="RHEA:18585"/>
        <dbReference type="ChEBI" id="CHEBI:57642"/>
        <dbReference type="ChEBI" id="CHEBI:59776"/>
        <dbReference type="EC" id="5.3.1.1"/>
    </reaction>
</comment>
<comment type="pathway">
    <text evidence="1">Carbohydrate biosynthesis; gluconeogenesis.</text>
</comment>
<comment type="pathway">
    <text evidence="1">Carbohydrate degradation; glycolysis; D-glyceraldehyde 3-phosphate from glycerone phosphate: step 1/1.</text>
</comment>
<comment type="subunit">
    <text evidence="1">Homodimer.</text>
</comment>
<comment type="subcellular location">
    <subcellularLocation>
        <location evidence="1">Cytoplasm</location>
    </subcellularLocation>
</comment>
<comment type="similarity">
    <text evidence="1">Belongs to the triosephosphate isomerase family.</text>
</comment>